<name>NUOH1_KORVE</name>
<proteinExistence type="inferred from homology"/>
<reference key="1">
    <citation type="journal article" date="2009" name="Appl. Environ. Microbiol.">
        <title>Three genomes from the phylum Acidobacteria provide insight into the lifestyles of these microorganisms in soils.</title>
        <authorList>
            <person name="Ward N.L."/>
            <person name="Challacombe J.F."/>
            <person name="Janssen P.H."/>
            <person name="Henrissat B."/>
            <person name="Coutinho P.M."/>
            <person name="Wu M."/>
            <person name="Xie G."/>
            <person name="Haft D.H."/>
            <person name="Sait M."/>
            <person name="Badger J."/>
            <person name="Barabote R.D."/>
            <person name="Bradley B."/>
            <person name="Brettin T.S."/>
            <person name="Brinkac L.M."/>
            <person name="Bruce D."/>
            <person name="Creasy T."/>
            <person name="Daugherty S.C."/>
            <person name="Davidsen T.M."/>
            <person name="DeBoy R.T."/>
            <person name="Detter J.C."/>
            <person name="Dodson R.J."/>
            <person name="Durkin A.S."/>
            <person name="Ganapathy A."/>
            <person name="Gwinn-Giglio M."/>
            <person name="Han C.S."/>
            <person name="Khouri H."/>
            <person name="Kiss H."/>
            <person name="Kothari S.P."/>
            <person name="Madupu R."/>
            <person name="Nelson K.E."/>
            <person name="Nelson W.C."/>
            <person name="Paulsen I."/>
            <person name="Penn K."/>
            <person name="Ren Q."/>
            <person name="Rosovitz M.J."/>
            <person name="Selengut J.D."/>
            <person name="Shrivastava S."/>
            <person name="Sullivan S.A."/>
            <person name="Tapia R."/>
            <person name="Thompson L.S."/>
            <person name="Watkins K.L."/>
            <person name="Yang Q."/>
            <person name="Yu C."/>
            <person name="Zafar N."/>
            <person name="Zhou L."/>
            <person name="Kuske C.R."/>
        </authorList>
    </citation>
    <scope>NUCLEOTIDE SEQUENCE [LARGE SCALE GENOMIC DNA]</scope>
    <source>
        <strain>Ellin345</strain>
    </source>
</reference>
<feature type="chain" id="PRO_0000299931" description="NADH-quinone oxidoreductase subunit H 1">
    <location>
        <begin position="1"/>
        <end position="426"/>
    </location>
</feature>
<feature type="transmembrane region" description="Helical" evidence="1">
    <location>
        <begin position="22"/>
        <end position="42"/>
    </location>
</feature>
<feature type="transmembrane region" description="Helical" evidence="1">
    <location>
        <begin position="91"/>
        <end position="111"/>
    </location>
</feature>
<feature type="transmembrane region" description="Helical" evidence="1">
    <location>
        <begin position="124"/>
        <end position="144"/>
    </location>
</feature>
<feature type="transmembrane region" description="Helical" evidence="1">
    <location>
        <begin position="163"/>
        <end position="183"/>
    </location>
</feature>
<feature type="transmembrane region" description="Helical" evidence="1">
    <location>
        <begin position="206"/>
        <end position="226"/>
    </location>
</feature>
<feature type="transmembrane region" description="Helical" evidence="1">
    <location>
        <begin position="258"/>
        <end position="278"/>
    </location>
</feature>
<feature type="transmembrane region" description="Helical" evidence="1">
    <location>
        <begin position="299"/>
        <end position="319"/>
    </location>
</feature>
<feature type="transmembrane region" description="Helical" evidence="1">
    <location>
        <begin position="331"/>
        <end position="351"/>
    </location>
</feature>
<feature type="transmembrane region" description="Helical" evidence="1">
    <location>
        <begin position="357"/>
        <end position="377"/>
    </location>
</feature>
<feature type="transmembrane region" description="Helical" evidence="1">
    <location>
        <begin position="392"/>
        <end position="412"/>
    </location>
</feature>
<keyword id="KW-0997">Cell inner membrane</keyword>
<keyword id="KW-1003">Cell membrane</keyword>
<keyword id="KW-0472">Membrane</keyword>
<keyword id="KW-0520">NAD</keyword>
<keyword id="KW-0874">Quinone</keyword>
<keyword id="KW-1185">Reference proteome</keyword>
<keyword id="KW-1278">Translocase</keyword>
<keyword id="KW-0812">Transmembrane</keyword>
<keyword id="KW-1133">Transmembrane helix</keyword>
<keyword id="KW-0830">Ubiquinone</keyword>
<comment type="function">
    <text evidence="1">NDH-1 shuttles electrons from NADH, via FMN and iron-sulfur (Fe-S) centers, to quinones in the respiratory chain. The immediate electron acceptor for the enzyme in this species is believed to be ubiquinone. Couples the redox reaction to proton translocation (for every two electrons transferred, four hydrogen ions are translocated across the cytoplasmic membrane), and thus conserves the redox energy in a proton gradient. This subunit may bind ubiquinone.</text>
</comment>
<comment type="catalytic activity">
    <reaction evidence="1">
        <text>a quinone + NADH + 5 H(+)(in) = a quinol + NAD(+) + 4 H(+)(out)</text>
        <dbReference type="Rhea" id="RHEA:57888"/>
        <dbReference type="ChEBI" id="CHEBI:15378"/>
        <dbReference type="ChEBI" id="CHEBI:24646"/>
        <dbReference type="ChEBI" id="CHEBI:57540"/>
        <dbReference type="ChEBI" id="CHEBI:57945"/>
        <dbReference type="ChEBI" id="CHEBI:132124"/>
    </reaction>
</comment>
<comment type="subunit">
    <text evidence="1">NDH-1 is composed of 14 different subunits. Subunits NuoA, H, J, K, L, M, N constitute the membrane sector of the complex.</text>
</comment>
<comment type="subcellular location">
    <subcellularLocation>
        <location evidence="1">Cell inner membrane</location>
        <topology evidence="1">Multi-pass membrane protein</topology>
    </subcellularLocation>
</comment>
<comment type="similarity">
    <text evidence="1">Belongs to the complex I subunit 1 family.</text>
</comment>
<evidence type="ECO:0000255" key="1">
    <source>
        <dbReference type="HAMAP-Rule" id="MF_01350"/>
    </source>
</evidence>
<sequence length="426" mass="46676">MISHFLNFLKFNGTPGEYGSPLWATVYILVIFGVASVAVMLMTYLERKVLAHMQIRLGPMRVGPHGLLQPIADALKLLIKEDIVPDGADKFLFWMAPVTVMMTAFTTYLVIPFGRSHAVTDMNIGVLFMIGISSLGVLAVVMAGWSSNSKYALMGGLRSAAQMVSYEVAMGLAIVSVLMMTSLQTGTGTLSMIGIVQAQQAQGSWFIFKFFPTGLVAFVIFAIAMVAETNRAPFDLPEAESELTAGFHTEYSGFRWSLFFLGEYVAMIAVSSIAVTLWLGGWLRPFPNALSGATWDFAFSVFPALLFFVLAAGCFIGWVRMPSKPAFKVQAIGLGIFGVLLGMIGAVLLIPAVRVRVSDIFWFSAKVGVFMYLYIWYRGTFPRYRFDQLMKIGWKVLLPVSLGVLIVTAVLGVRHELIAGLMGVAR</sequence>
<gene>
    <name evidence="1" type="primary">nuoH1</name>
    <name type="ordered locus">Acid345_1290</name>
</gene>
<organism>
    <name type="scientific">Koribacter versatilis (strain Ellin345)</name>
    <dbReference type="NCBI Taxonomy" id="204669"/>
    <lineage>
        <taxon>Bacteria</taxon>
        <taxon>Pseudomonadati</taxon>
        <taxon>Acidobacteriota</taxon>
        <taxon>Terriglobia</taxon>
        <taxon>Terriglobales</taxon>
        <taxon>Candidatus Korobacteraceae</taxon>
        <taxon>Candidatus Korobacter</taxon>
    </lineage>
</organism>
<dbReference type="EC" id="7.1.1.-" evidence="1"/>
<dbReference type="EMBL" id="CP000360">
    <property type="protein sequence ID" value="ABF40292.1"/>
    <property type="molecule type" value="Genomic_DNA"/>
</dbReference>
<dbReference type="RefSeq" id="WP_011522094.1">
    <property type="nucleotide sequence ID" value="NC_008009.1"/>
</dbReference>
<dbReference type="SMR" id="Q1IS58"/>
<dbReference type="STRING" id="204669.Acid345_1290"/>
<dbReference type="EnsemblBacteria" id="ABF40292">
    <property type="protein sequence ID" value="ABF40292"/>
    <property type="gene ID" value="Acid345_1290"/>
</dbReference>
<dbReference type="KEGG" id="aba:Acid345_1290"/>
<dbReference type="eggNOG" id="COG1005">
    <property type="taxonomic scope" value="Bacteria"/>
</dbReference>
<dbReference type="HOGENOM" id="CLU_015134_0_1_0"/>
<dbReference type="OrthoDB" id="9803734at2"/>
<dbReference type="Proteomes" id="UP000002432">
    <property type="component" value="Chromosome"/>
</dbReference>
<dbReference type="GO" id="GO:0005886">
    <property type="term" value="C:plasma membrane"/>
    <property type="evidence" value="ECO:0007669"/>
    <property type="project" value="UniProtKB-SubCell"/>
</dbReference>
<dbReference type="GO" id="GO:0003954">
    <property type="term" value="F:NADH dehydrogenase activity"/>
    <property type="evidence" value="ECO:0007669"/>
    <property type="project" value="TreeGrafter"/>
</dbReference>
<dbReference type="GO" id="GO:0016655">
    <property type="term" value="F:oxidoreductase activity, acting on NAD(P)H, quinone or similar compound as acceptor"/>
    <property type="evidence" value="ECO:0007669"/>
    <property type="project" value="UniProtKB-UniRule"/>
</dbReference>
<dbReference type="GO" id="GO:0048038">
    <property type="term" value="F:quinone binding"/>
    <property type="evidence" value="ECO:0007669"/>
    <property type="project" value="UniProtKB-KW"/>
</dbReference>
<dbReference type="GO" id="GO:0009060">
    <property type="term" value="P:aerobic respiration"/>
    <property type="evidence" value="ECO:0007669"/>
    <property type="project" value="TreeGrafter"/>
</dbReference>
<dbReference type="HAMAP" id="MF_01350">
    <property type="entry name" value="NDH1_NuoH"/>
    <property type="match status" value="1"/>
</dbReference>
<dbReference type="InterPro" id="IPR001694">
    <property type="entry name" value="NADH_UbQ_OxRdtase_su1/FPO"/>
</dbReference>
<dbReference type="InterPro" id="IPR018086">
    <property type="entry name" value="NADH_UbQ_OxRdtase_su1_CS"/>
</dbReference>
<dbReference type="PANTHER" id="PTHR11432">
    <property type="entry name" value="NADH DEHYDROGENASE SUBUNIT 1"/>
    <property type="match status" value="1"/>
</dbReference>
<dbReference type="PANTHER" id="PTHR11432:SF3">
    <property type="entry name" value="NADH-UBIQUINONE OXIDOREDUCTASE CHAIN 1"/>
    <property type="match status" value="1"/>
</dbReference>
<dbReference type="Pfam" id="PF00146">
    <property type="entry name" value="NADHdh"/>
    <property type="match status" value="1"/>
</dbReference>
<dbReference type="PROSITE" id="PS00667">
    <property type="entry name" value="COMPLEX1_ND1_1"/>
    <property type="match status" value="1"/>
</dbReference>
<dbReference type="PROSITE" id="PS00668">
    <property type="entry name" value="COMPLEX1_ND1_2"/>
    <property type="match status" value="1"/>
</dbReference>
<accession>Q1IS58</accession>
<protein>
    <recommendedName>
        <fullName evidence="1">NADH-quinone oxidoreductase subunit H 1</fullName>
        <ecNumber evidence="1">7.1.1.-</ecNumber>
    </recommendedName>
    <alternativeName>
        <fullName evidence="1">NADH dehydrogenase I subunit H 1</fullName>
    </alternativeName>
    <alternativeName>
        <fullName evidence="1">NDH-1 subunit H 1</fullName>
    </alternativeName>
</protein>